<comment type="function">
    <text evidence="1">Part of the ABC transporter complex TagGH involved in teichoic acids export. Responsible for energy coupling to the transport system.</text>
</comment>
<comment type="catalytic activity">
    <reaction evidence="1">
        <text>ATP + H2O + teichoic acidSide 1 = ADP + phosphate + teichoic acidSide 2.</text>
        <dbReference type="EC" id="7.5.2.4"/>
    </reaction>
</comment>
<comment type="subunit">
    <text evidence="1">The complex is composed of two ATP-binding proteins (TagH) and two transmembrane proteins (TagG).</text>
</comment>
<comment type="subcellular location">
    <subcellularLocation>
        <location evidence="1">Cell membrane</location>
        <topology evidence="1">Peripheral membrane protein</topology>
    </subcellularLocation>
</comment>
<comment type="similarity">
    <text evidence="1">Belongs to the ABC transporter superfamily. Teichoic acids exporter (TC 3.A.1.104.1) family.</text>
</comment>
<proteinExistence type="inferred from homology"/>
<gene>
    <name evidence="1" type="primary">tagH</name>
    <name type="ordered locus">SH2259</name>
</gene>
<reference key="1">
    <citation type="journal article" date="2005" name="J. Bacteriol.">
        <title>Whole-genome sequencing of Staphylococcus haemolyticus uncovers the extreme plasticity of its genome and the evolution of human-colonizing staphylococcal species.</title>
        <authorList>
            <person name="Takeuchi F."/>
            <person name="Watanabe S."/>
            <person name="Baba T."/>
            <person name="Yuzawa H."/>
            <person name="Ito T."/>
            <person name="Morimoto Y."/>
            <person name="Kuroda M."/>
            <person name="Cui L."/>
            <person name="Takahashi M."/>
            <person name="Ankai A."/>
            <person name="Baba S."/>
            <person name="Fukui S."/>
            <person name="Lee J.C."/>
            <person name="Hiramatsu K."/>
        </authorList>
    </citation>
    <scope>NUCLEOTIDE SEQUENCE [LARGE SCALE GENOMIC DNA]</scope>
    <source>
        <strain>JCSC1435</strain>
    </source>
</reference>
<feature type="chain" id="PRO_0000275853" description="Teichoic acids export ATP-binding protein TagH">
    <location>
        <begin position="1"/>
        <end position="264"/>
    </location>
</feature>
<feature type="domain" description="ABC transporter" evidence="1">
    <location>
        <begin position="24"/>
        <end position="243"/>
    </location>
</feature>
<feature type="binding site" evidence="1">
    <location>
        <begin position="57"/>
        <end position="64"/>
    </location>
    <ligand>
        <name>ATP</name>
        <dbReference type="ChEBI" id="CHEBI:30616"/>
    </ligand>
</feature>
<evidence type="ECO:0000255" key="1">
    <source>
        <dbReference type="HAMAP-Rule" id="MF_01715"/>
    </source>
</evidence>
<accession>Q4L459</accession>
<sequence>MSVSVNINNVTKEYRIYRNNKERIKDALIPKNKNNTFFALDDVSITAHEGDVIGLVGINGSGKSTLSNMIGGSISPTSGNIERNGEVSVIAINAGLNGRLTGVENIEFKMLCMGFKRKEIKQLMPQVIEFSELGEFIHQPVKNYSSGMRAKLGFSINVTINPDILVIDEALSVGDQTFTQKCLDKIYEFKEANKTIFFVSHNIRQVREFCTKIAWIEGGKLKEYGDLEEVLPKYEQFLKDFKKKSKADQKAFRKGLDEKRFIVK</sequence>
<keyword id="KW-0067">ATP-binding</keyword>
<keyword id="KW-1003">Cell membrane</keyword>
<keyword id="KW-0472">Membrane</keyword>
<keyword id="KW-0547">Nucleotide-binding</keyword>
<keyword id="KW-1278">Translocase</keyword>
<keyword id="KW-0813">Transport</keyword>
<dbReference type="EC" id="7.5.2.4" evidence="1"/>
<dbReference type="EMBL" id="AP006716">
    <property type="protein sequence ID" value="BAE05568.1"/>
    <property type="molecule type" value="Genomic_DNA"/>
</dbReference>
<dbReference type="RefSeq" id="WP_011276519.1">
    <property type="nucleotide sequence ID" value="NC_007168.1"/>
</dbReference>
<dbReference type="SMR" id="Q4L459"/>
<dbReference type="KEGG" id="sha:SH2259"/>
<dbReference type="eggNOG" id="COG1134">
    <property type="taxonomic scope" value="Bacteria"/>
</dbReference>
<dbReference type="HOGENOM" id="CLU_000604_1_2_9"/>
<dbReference type="OrthoDB" id="9778870at2"/>
<dbReference type="Proteomes" id="UP000000543">
    <property type="component" value="Chromosome"/>
</dbReference>
<dbReference type="GO" id="GO:0005886">
    <property type="term" value="C:plasma membrane"/>
    <property type="evidence" value="ECO:0007669"/>
    <property type="project" value="UniProtKB-SubCell"/>
</dbReference>
<dbReference type="GO" id="GO:0015438">
    <property type="term" value="F:ABC-type teichoic acid transporter activity"/>
    <property type="evidence" value="ECO:0007669"/>
    <property type="project" value="UniProtKB-EC"/>
</dbReference>
<dbReference type="GO" id="GO:0005524">
    <property type="term" value="F:ATP binding"/>
    <property type="evidence" value="ECO:0007669"/>
    <property type="project" value="UniProtKB-KW"/>
</dbReference>
<dbReference type="GO" id="GO:0016887">
    <property type="term" value="F:ATP hydrolysis activity"/>
    <property type="evidence" value="ECO:0007669"/>
    <property type="project" value="InterPro"/>
</dbReference>
<dbReference type="CDD" id="cd03220">
    <property type="entry name" value="ABC_KpsT_Wzt"/>
    <property type="match status" value="1"/>
</dbReference>
<dbReference type="FunFam" id="3.40.50.300:FF:003010">
    <property type="entry name" value="Teichoic acids export ATP-binding protein TagH"/>
    <property type="match status" value="1"/>
</dbReference>
<dbReference type="Gene3D" id="3.40.50.300">
    <property type="entry name" value="P-loop containing nucleotide triphosphate hydrolases"/>
    <property type="match status" value="1"/>
</dbReference>
<dbReference type="InterPro" id="IPR003593">
    <property type="entry name" value="AAA+_ATPase"/>
</dbReference>
<dbReference type="InterPro" id="IPR003439">
    <property type="entry name" value="ABC_transporter-like_ATP-bd"/>
</dbReference>
<dbReference type="InterPro" id="IPR017871">
    <property type="entry name" value="ABC_transporter-like_CS"/>
</dbReference>
<dbReference type="InterPro" id="IPR015860">
    <property type="entry name" value="ABC_transpr_TagH-like"/>
</dbReference>
<dbReference type="InterPro" id="IPR050683">
    <property type="entry name" value="Bact_Polysacc_Export_ATP-bd"/>
</dbReference>
<dbReference type="InterPro" id="IPR027417">
    <property type="entry name" value="P-loop_NTPase"/>
</dbReference>
<dbReference type="NCBIfam" id="NF010066">
    <property type="entry name" value="PRK13546.1"/>
    <property type="match status" value="1"/>
</dbReference>
<dbReference type="PANTHER" id="PTHR46743">
    <property type="entry name" value="TEICHOIC ACIDS EXPORT ATP-BINDING PROTEIN TAGH"/>
    <property type="match status" value="1"/>
</dbReference>
<dbReference type="PANTHER" id="PTHR46743:SF2">
    <property type="entry name" value="TEICHOIC ACIDS EXPORT ATP-BINDING PROTEIN TAGH"/>
    <property type="match status" value="1"/>
</dbReference>
<dbReference type="Pfam" id="PF00005">
    <property type="entry name" value="ABC_tran"/>
    <property type="match status" value="1"/>
</dbReference>
<dbReference type="SMART" id="SM00382">
    <property type="entry name" value="AAA"/>
    <property type="match status" value="1"/>
</dbReference>
<dbReference type="SUPFAM" id="SSF52540">
    <property type="entry name" value="P-loop containing nucleoside triphosphate hydrolases"/>
    <property type="match status" value="1"/>
</dbReference>
<dbReference type="PROSITE" id="PS00211">
    <property type="entry name" value="ABC_TRANSPORTER_1"/>
    <property type="match status" value="1"/>
</dbReference>
<dbReference type="PROSITE" id="PS50893">
    <property type="entry name" value="ABC_TRANSPORTER_2"/>
    <property type="match status" value="1"/>
</dbReference>
<dbReference type="PROSITE" id="PS51251">
    <property type="entry name" value="TAGH"/>
    <property type="match status" value="1"/>
</dbReference>
<organism>
    <name type="scientific">Staphylococcus haemolyticus (strain JCSC1435)</name>
    <dbReference type="NCBI Taxonomy" id="279808"/>
    <lineage>
        <taxon>Bacteria</taxon>
        <taxon>Bacillati</taxon>
        <taxon>Bacillota</taxon>
        <taxon>Bacilli</taxon>
        <taxon>Bacillales</taxon>
        <taxon>Staphylococcaceae</taxon>
        <taxon>Staphylococcus</taxon>
    </lineage>
</organism>
<name>TAGH_STAHJ</name>
<protein>
    <recommendedName>
        <fullName evidence="1">Teichoic acids export ATP-binding protein TagH</fullName>
        <ecNumber evidence="1">7.5.2.4</ecNumber>
    </recommendedName>
</protein>